<comment type="function">
    <text evidence="1">Catalyzes the ATP-dependent condensation of GlcN-Ins and L-cysteine to form L-Cys-GlcN-Ins.</text>
</comment>
<comment type="catalytic activity">
    <reaction evidence="1">
        <text>1D-myo-inositol 2-amino-2-deoxy-alpha-D-glucopyranoside + L-cysteine + ATP = 1D-myo-inositol 2-(L-cysteinylamino)-2-deoxy-alpha-D-glucopyranoside + AMP + diphosphate + H(+)</text>
        <dbReference type="Rhea" id="RHEA:26176"/>
        <dbReference type="ChEBI" id="CHEBI:15378"/>
        <dbReference type="ChEBI" id="CHEBI:30616"/>
        <dbReference type="ChEBI" id="CHEBI:33019"/>
        <dbReference type="ChEBI" id="CHEBI:35235"/>
        <dbReference type="ChEBI" id="CHEBI:58886"/>
        <dbReference type="ChEBI" id="CHEBI:58887"/>
        <dbReference type="ChEBI" id="CHEBI:456215"/>
        <dbReference type="EC" id="6.3.1.13"/>
    </reaction>
</comment>
<comment type="cofactor">
    <cofactor evidence="1">
        <name>Zn(2+)</name>
        <dbReference type="ChEBI" id="CHEBI:29105"/>
    </cofactor>
    <text evidence="1">Binds 1 zinc ion per subunit.</text>
</comment>
<comment type="subunit">
    <text evidence="1">Monomer.</text>
</comment>
<comment type="similarity">
    <text evidence="1">Belongs to the class-I aminoacyl-tRNA synthetase family. MshC subfamily.</text>
</comment>
<reference key="1">
    <citation type="submission" date="2007-02" db="EMBL/GenBank/DDBJ databases">
        <title>Complete sequence of Mycobacterium sp. JLS.</title>
        <authorList>
            <consortium name="US DOE Joint Genome Institute"/>
            <person name="Copeland A."/>
            <person name="Lucas S."/>
            <person name="Lapidus A."/>
            <person name="Barry K."/>
            <person name="Detter J.C."/>
            <person name="Glavina del Rio T."/>
            <person name="Hammon N."/>
            <person name="Israni S."/>
            <person name="Dalin E."/>
            <person name="Tice H."/>
            <person name="Pitluck S."/>
            <person name="Chain P."/>
            <person name="Malfatti S."/>
            <person name="Shin M."/>
            <person name="Vergez L."/>
            <person name="Schmutz J."/>
            <person name="Larimer F."/>
            <person name="Land M."/>
            <person name="Hauser L."/>
            <person name="Kyrpides N."/>
            <person name="Mikhailova N."/>
            <person name="Miller C.D."/>
            <person name="Anderson A.J."/>
            <person name="Sims R.C."/>
            <person name="Richardson P."/>
        </authorList>
    </citation>
    <scope>NUCLEOTIDE SEQUENCE [LARGE SCALE GENOMIC DNA]</scope>
    <source>
        <strain>JLS</strain>
    </source>
</reference>
<gene>
    <name evidence="1" type="primary">mshC</name>
    <name type="ordered locus">Mjls_3165</name>
</gene>
<sequence>MESWSAPEVPALPGRGPQLRLYDSADRQVRPVSAGDTATMYVCGITPYDATHLGHAATYLAFDLVHRLWLDAGHRVHYVQNITDVDDPLFERAARDGIDWRDLGAREIQLFREDMAALRVLPPHDYVAATDAIAEVIELVEKMLASGAAYVVDDPEFPDVYYRADATVQFGYESNYDHETMLTLFAERGGDPDRAGKADELDALLWRAERPGEPSWPSPFGPGRPGWHVECAAIALSRIGTGLDIQGGGSDLIFPHHEFSAAHAESVTGERRFARHYVHAGMIGWDGHKMSKSRGNLVLVSRLRAEGVDPSAIRLGLLAGHYREDRFWSDDVLSDAQTRLQRWRRATSLPTGPDATDVLARVRTYLADDLDTPKALIALDAWCTEALDGGGSDVTAPKTVATAVDALLGVALPVE</sequence>
<feature type="chain" id="PRO_0000400463" description="L-cysteine:1D-myo-inositol 2-amino-2-deoxy-alpha-D-glucopyranoside ligase">
    <location>
        <begin position="1"/>
        <end position="415"/>
    </location>
</feature>
<feature type="short sequence motif" description="'HIGH' region" evidence="1">
    <location>
        <begin position="45"/>
        <end position="55"/>
    </location>
</feature>
<feature type="short sequence motif" description="'ERGGDP' region" evidence="1">
    <location>
        <begin position="187"/>
        <end position="192"/>
    </location>
</feature>
<feature type="short sequence motif" description="'KMSKS' region" evidence="1">
    <location>
        <begin position="289"/>
        <end position="293"/>
    </location>
</feature>
<feature type="binding site" evidence="1">
    <location>
        <begin position="43"/>
        <end position="46"/>
    </location>
    <ligand>
        <name>L-cysteinyl-5'-AMP</name>
        <dbReference type="ChEBI" id="CHEBI:144924"/>
    </ligand>
</feature>
<feature type="binding site" evidence="1">
    <location>
        <position position="43"/>
    </location>
    <ligand>
        <name>Zn(2+)</name>
        <dbReference type="ChEBI" id="CHEBI:29105"/>
    </ligand>
</feature>
<feature type="binding site" evidence="1">
    <location>
        <position position="58"/>
    </location>
    <ligand>
        <name>L-cysteinyl-5'-AMP</name>
        <dbReference type="ChEBI" id="CHEBI:144924"/>
    </ligand>
</feature>
<feature type="binding site" evidence="1">
    <location>
        <begin position="81"/>
        <end position="83"/>
    </location>
    <ligand>
        <name>L-cysteinyl-5'-AMP</name>
        <dbReference type="ChEBI" id="CHEBI:144924"/>
    </ligand>
</feature>
<feature type="binding site" evidence="1">
    <location>
        <position position="227"/>
    </location>
    <ligand>
        <name>L-cysteinyl-5'-AMP</name>
        <dbReference type="ChEBI" id="CHEBI:144924"/>
    </ligand>
</feature>
<feature type="binding site" evidence="1">
    <location>
        <position position="231"/>
    </location>
    <ligand>
        <name>Zn(2+)</name>
        <dbReference type="ChEBI" id="CHEBI:29105"/>
    </ligand>
</feature>
<feature type="binding site" evidence="1">
    <location>
        <begin position="249"/>
        <end position="251"/>
    </location>
    <ligand>
        <name>L-cysteinyl-5'-AMP</name>
        <dbReference type="ChEBI" id="CHEBI:144924"/>
    </ligand>
</feature>
<feature type="binding site" evidence="1">
    <location>
        <position position="256"/>
    </location>
    <ligand>
        <name>Zn(2+)</name>
        <dbReference type="ChEBI" id="CHEBI:29105"/>
    </ligand>
</feature>
<feature type="binding site" evidence="1">
    <location>
        <position position="283"/>
    </location>
    <ligand>
        <name>L-cysteinyl-5'-AMP</name>
        <dbReference type="ChEBI" id="CHEBI:144924"/>
    </ligand>
</feature>
<name>MSHC_MYCSJ</name>
<organism>
    <name type="scientific">Mycobacterium sp. (strain JLS)</name>
    <dbReference type="NCBI Taxonomy" id="164757"/>
    <lineage>
        <taxon>Bacteria</taxon>
        <taxon>Bacillati</taxon>
        <taxon>Actinomycetota</taxon>
        <taxon>Actinomycetes</taxon>
        <taxon>Mycobacteriales</taxon>
        <taxon>Mycobacteriaceae</taxon>
        <taxon>Mycobacterium</taxon>
    </lineage>
</organism>
<accession>A3Q1B7</accession>
<keyword id="KW-0067">ATP-binding</keyword>
<keyword id="KW-0436">Ligase</keyword>
<keyword id="KW-0479">Metal-binding</keyword>
<keyword id="KW-0547">Nucleotide-binding</keyword>
<keyword id="KW-0862">Zinc</keyword>
<proteinExistence type="inferred from homology"/>
<protein>
    <recommendedName>
        <fullName evidence="1">L-cysteine:1D-myo-inositol 2-amino-2-deoxy-alpha-D-glucopyranoside ligase</fullName>
        <shortName evidence="1">L-Cys:GlcN-Ins ligase</shortName>
        <ecNumber evidence="1">6.3.1.13</ecNumber>
    </recommendedName>
    <alternativeName>
        <fullName evidence="1">Mycothiol ligase</fullName>
        <shortName evidence="1">MSH ligase</shortName>
    </alternativeName>
</protein>
<evidence type="ECO:0000255" key="1">
    <source>
        <dbReference type="HAMAP-Rule" id="MF_01697"/>
    </source>
</evidence>
<dbReference type="EC" id="6.3.1.13" evidence="1"/>
<dbReference type="EMBL" id="CP000580">
    <property type="protein sequence ID" value="ABN98944.1"/>
    <property type="molecule type" value="Genomic_DNA"/>
</dbReference>
<dbReference type="SMR" id="A3Q1B7"/>
<dbReference type="KEGG" id="mjl:Mjls_3165"/>
<dbReference type="HOGENOM" id="CLU_013528_0_0_11"/>
<dbReference type="BioCyc" id="MSP164757:G1G8C-3190-MONOMER"/>
<dbReference type="GO" id="GO:0005829">
    <property type="term" value="C:cytosol"/>
    <property type="evidence" value="ECO:0007669"/>
    <property type="project" value="TreeGrafter"/>
</dbReference>
<dbReference type="GO" id="GO:0005524">
    <property type="term" value="F:ATP binding"/>
    <property type="evidence" value="ECO:0007669"/>
    <property type="project" value="UniProtKB-KW"/>
</dbReference>
<dbReference type="GO" id="GO:0035446">
    <property type="term" value="F:cysteine-glucosaminylinositol ligase activity"/>
    <property type="evidence" value="ECO:0007669"/>
    <property type="project" value="UniProtKB-UniRule"/>
</dbReference>
<dbReference type="GO" id="GO:0004817">
    <property type="term" value="F:cysteine-tRNA ligase activity"/>
    <property type="evidence" value="ECO:0007669"/>
    <property type="project" value="TreeGrafter"/>
</dbReference>
<dbReference type="GO" id="GO:0008270">
    <property type="term" value="F:zinc ion binding"/>
    <property type="evidence" value="ECO:0007669"/>
    <property type="project" value="UniProtKB-UniRule"/>
</dbReference>
<dbReference type="GO" id="GO:0006423">
    <property type="term" value="P:cysteinyl-tRNA aminoacylation"/>
    <property type="evidence" value="ECO:0007669"/>
    <property type="project" value="TreeGrafter"/>
</dbReference>
<dbReference type="GO" id="GO:0010125">
    <property type="term" value="P:mycothiol biosynthetic process"/>
    <property type="evidence" value="ECO:0007669"/>
    <property type="project" value="UniProtKB-UniRule"/>
</dbReference>
<dbReference type="CDD" id="cd07955">
    <property type="entry name" value="Anticodon_Ia_Cys_like"/>
    <property type="match status" value="1"/>
</dbReference>
<dbReference type="CDD" id="cd00672">
    <property type="entry name" value="CysRS_core"/>
    <property type="match status" value="1"/>
</dbReference>
<dbReference type="FunFam" id="3.40.50.620:FF:000134">
    <property type="entry name" value="L-cysteine:1D-myo-inositol 2-amino-2-deoxy-alpha-D-glucopyranoside ligase"/>
    <property type="match status" value="1"/>
</dbReference>
<dbReference type="Gene3D" id="1.20.120.640">
    <property type="entry name" value="Anticodon-binding domain of a subclass of class I aminoacyl-tRNA synthetases"/>
    <property type="match status" value="1"/>
</dbReference>
<dbReference type="Gene3D" id="3.40.50.620">
    <property type="entry name" value="HUPs"/>
    <property type="match status" value="1"/>
</dbReference>
<dbReference type="HAMAP" id="MF_01697">
    <property type="entry name" value="MshC"/>
    <property type="match status" value="1"/>
</dbReference>
<dbReference type="InterPro" id="IPR024909">
    <property type="entry name" value="Cys-tRNA/MSH_ligase"/>
</dbReference>
<dbReference type="InterPro" id="IPR017812">
    <property type="entry name" value="Mycothiol_ligase_MshC"/>
</dbReference>
<dbReference type="InterPro" id="IPR014729">
    <property type="entry name" value="Rossmann-like_a/b/a_fold"/>
</dbReference>
<dbReference type="InterPro" id="IPR032678">
    <property type="entry name" value="tRNA-synt_1_cat_dom"/>
</dbReference>
<dbReference type="NCBIfam" id="TIGR03447">
    <property type="entry name" value="mycothiol_MshC"/>
    <property type="match status" value="1"/>
</dbReference>
<dbReference type="PANTHER" id="PTHR10890:SF3">
    <property type="entry name" value="CYSTEINE--TRNA LIGASE, CYTOPLASMIC"/>
    <property type="match status" value="1"/>
</dbReference>
<dbReference type="PANTHER" id="PTHR10890">
    <property type="entry name" value="CYSTEINYL-TRNA SYNTHETASE"/>
    <property type="match status" value="1"/>
</dbReference>
<dbReference type="Pfam" id="PF01406">
    <property type="entry name" value="tRNA-synt_1e"/>
    <property type="match status" value="1"/>
</dbReference>
<dbReference type="PRINTS" id="PR00983">
    <property type="entry name" value="TRNASYNTHCYS"/>
</dbReference>
<dbReference type="SUPFAM" id="SSF52374">
    <property type="entry name" value="Nucleotidylyl transferase"/>
    <property type="match status" value="1"/>
</dbReference>